<organism>
    <name type="scientific">Pyrobaculum islandicum (strain DSM 4184 / JCM 9189 / GEO3)</name>
    <dbReference type="NCBI Taxonomy" id="384616"/>
    <lineage>
        <taxon>Archaea</taxon>
        <taxon>Thermoproteota</taxon>
        <taxon>Thermoprotei</taxon>
        <taxon>Thermoproteales</taxon>
        <taxon>Thermoproteaceae</taxon>
        <taxon>Pyrobaculum</taxon>
    </lineage>
</organism>
<comment type="function">
    <text evidence="2">GTP hydrolase that promotes the GTP-dependent binding of aminoacyl-tRNA to the A-site of ribosomes during protein biosynthesis.</text>
</comment>
<comment type="catalytic activity">
    <reaction evidence="2">
        <text>GTP + H2O = GDP + phosphate + H(+)</text>
        <dbReference type="Rhea" id="RHEA:19669"/>
        <dbReference type="ChEBI" id="CHEBI:15377"/>
        <dbReference type="ChEBI" id="CHEBI:15378"/>
        <dbReference type="ChEBI" id="CHEBI:37565"/>
        <dbReference type="ChEBI" id="CHEBI:43474"/>
        <dbReference type="ChEBI" id="CHEBI:58189"/>
        <dbReference type="EC" id="3.6.5.3"/>
    </reaction>
    <physiologicalReaction direction="left-to-right" evidence="2">
        <dbReference type="Rhea" id="RHEA:19670"/>
    </physiologicalReaction>
</comment>
<comment type="subcellular location">
    <subcellularLocation>
        <location evidence="2">Cytoplasm</location>
    </subcellularLocation>
</comment>
<comment type="similarity">
    <text evidence="2">Belongs to the TRAFAC class translation factor GTPase superfamily. Classic translation factor GTPase family. EF-Tu/EF-1A subfamily.</text>
</comment>
<dbReference type="EC" id="3.6.5.3" evidence="2"/>
<dbReference type="EMBL" id="CP000504">
    <property type="protein sequence ID" value="ABL87575.1"/>
    <property type="molecule type" value="Genomic_DNA"/>
</dbReference>
<dbReference type="RefSeq" id="WP_011762152.1">
    <property type="nucleotide sequence ID" value="NC_008701.1"/>
</dbReference>
<dbReference type="SMR" id="A1RRJ3"/>
<dbReference type="STRING" id="384616.Pisl_0397"/>
<dbReference type="GeneID" id="4616364"/>
<dbReference type="KEGG" id="pis:Pisl_0397"/>
<dbReference type="eggNOG" id="arCOG01561">
    <property type="taxonomic scope" value="Archaea"/>
</dbReference>
<dbReference type="HOGENOM" id="CLU_007265_3_5_2"/>
<dbReference type="OrthoDB" id="371718at2157"/>
<dbReference type="Proteomes" id="UP000002595">
    <property type="component" value="Chromosome"/>
</dbReference>
<dbReference type="GO" id="GO:0005737">
    <property type="term" value="C:cytoplasm"/>
    <property type="evidence" value="ECO:0007669"/>
    <property type="project" value="UniProtKB-SubCell"/>
</dbReference>
<dbReference type="GO" id="GO:0005525">
    <property type="term" value="F:GTP binding"/>
    <property type="evidence" value="ECO:0007669"/>
    <property type="project" value="UniProtKB-UniRule"/>
</dbReference>
<dbReference type="GO" id="GO:0003924">
    <property type="term" value="F:GTPase activity"/>
    <property type="evidence" value="ECO:0007669"/>
    <property type="project" value="InterPro"/>
</dbReference>
<dbReference type="GO" id="GO:0003746">
    <property type="term" value="F:translation elongation factor activity"/>
    <property type="evidence" value="ECO:0007669"/>
    <property type="project" value="UniProtKB-UniRule"/>
</dbReference>
<dbReference type="CDD" id="cd01883">
    <property type="entry name" value="EF1_alpha"/>
    <property type="match status" value="1"/>
</dbReference>
<dbReference type="CDD" id="cd03693">
    <property type="entry name" value="EF1_alpha_II"/>
    <property type="match status" value="1"/>
</dbReference>
<dbReference type="CDD" id="cd03705">
    <property type="entry name" value="EF1_alpha_III"/>
    <property type="match status" value="1"/>
</dbReference>
<dbReference type="FunFam" id="2.40.30.10:FF:000005">
    <property type="entry name" value="Elongation factor 1-alpha"/>
    <property type="match status" value="1"/>
</dbReference>
<dbReference type="FunFam" id="2.40.30.10:FF:000020">
    <property type="entry name" value="Translation elongation factor EF-1"/>
    <property type="match status" value="1"/>
</dbReference>
<dbReference type="FunFam" id="3.40.50.300:FF:000204">
    <property type="entry name" value="Translation elongation factor Tu"/>
    <property type="match status" value="1"/>
</dbReference>
<dbReference type="Gene3D" id="3.40.50.300">
    <property type="entry name" value="P-loop containing nucleotide triphosphate hydrolases"/>
    <property type="match status" value="1"/>
</dbReference>
<dbReference type="Gene3D" id="2.40.30.10">
    <property type="entry name" value="Translation factors"/>
    <property type="match status" value="2"/>
</dbReference>
<dbReference type="HAMAP" id="MF_00118_A">
    <property type="entry name" value="EF_Tu_A"/>
    <property type="match status" value="1"/>
</dbReference>
<dbReference type="InterPro" id="IPR004161">
    <property type="entry name" value="EFTu-like_2"/>
</dbReference>
<dbReference type="InterPro" id="IPR029459">
    <property type="entry name" value="EFTU-type"/>
</dbReference>
<dbReference type="InterPro" id="IPR031157">
    <property type="entry name" value="G_TR_CS"/>
</dbReference>
<dbReference type="InterPro" id="IPR054696">
    <property type="entry name" value="GTP-eEF1A_C"/>
</dbReference>
<dbReference type="InterPro" id="IPR027417">
    <property type="entry name" value="P-loop_NTPase"/>
</dbReference>
<dbReference type="InterPro" id="IPR000795">
    <property type="entry name" value="T_Tr_GTP-bd_dom"/>
</dbReference>
<dbReference type="InterPro" id="IPR050100">
    <property type="entry name" value="TRAFAC_GTPase_members"/>
</dbReference>
<dbReference type="InterPro" id="IPR009000">
    <property type="entry name" value="Transl_B-barrel_sf"/>
</dbReference>
<dbReference type="InterPro" id="IPR009001">
    <property type="entry name" value="Transl_elong_EF1A/Init_IF2_C"/>
</dbReference>
<dbReference type="InterPro" id="IPR004539">
    <property type="entry name" value="Transl_elong_EF1A_euk/arc"/>
</dbReference>
<dbReference type="NCBIfam" id="TIGR00483">
    <property type="entry name" value="EF-1_alpha"/>
    <property type="match status" value="1"/>
</dbReference>
<dbReference type="NCBIfam" id="NF008969">
    <property type="entry name" value="PRK12317.1"/>
    <property type="match status" value="1"/>
</dbReference>
<dbReference type="PANTHER" id="PTHR23115">
    <property type="entry name" value="TRANSLATION FACTOR"/>
    <property type="match status" value="1"/>
</dbReference>
<dbReference type="Pfam" id="PF22594">
    <property type="entry name" value="GTP-eEF1A_C"/>
    <property type="match status" value="1"/>
</dbReference>
<dbReference type="Pfam" id="PF00009">
    <property type="entry name" value="GTP_EFTU"/>
    <property type="match status" value="1"/>
</dbReference>
<dbReference type="Pfam" id="PF03144">
    <property type="entry name" value="GTP_EFTU_D2"/>
    <property type="match status" value="1"/>
</dbReference>
<dbReference type="Pfam" id="PF14578">
    <property type="entry name" value="GTP_EFTU_D4"/>
    <property type="match status" value="1"/>
</dbReference>
<dbReference type="PRINTS" id="PR00315">
    <property type="entry name" value="ELONGATNFCT"/>
</dbReference>
<dbReference type="SUPFAM" id="SSF50465">
    <property type="entry name" value="EF-Tu/eEF-1alpha/eIF2-gamma C-terminal domain"/>
    <property type="match status" value="1"/>
</dbReference>
<dbReference type="SUPFAM" id="SSF52540">
    <property type="entry name" value="P-loop containing nucleoside triphosphate hydrolases"/>
    <property type="match status" value="1"/>
</dbReference>
<dbReference type="SUPFAM" id="SSF50447">
    <property type="entry name" value="Translation proteins"/>
    <property type="match status" value="1"/>
</dbReference>
<dbReference type="PROSITE" id="PS00301">
    <property type="entry name" value="G_TR_1"/>
    <property type="match status" value="1"/>
</dbReference>
<dbReference type="PROSITE" id="PS51722">
    <property type="entry name" value="G_TR_2"/>
    <property type="match status" value="1"/>
</dbReference>
<reference key="1">
    <citation type="submission" date="2006-12" db="EMBL/GenBank/DDBJ databases">
        <title>Complete sequence of Pyrobaculum islandicum DSM 4184.</title>
        <authorList>
            <person name="Copeland A."/>
            <person name="Lucas S."/>
            <person name="Lapidus A."/>
            <person name="Barry K."/>
            <person name="Detter J.C."/>
            <person name="Glavina del Rio T."/>
            <person name="Dalin E."/>
            <person name="Tice H."/>
            <person name="Pitluck S."/>
            <person name="Meincke L."/>
            <person name="Brettin T."/>
            <person name="Bruce D."/>
            <person name="Han C."/>
            <person name="Tapia R."/>
            <person name="Gilna P."/>
            <person name="Schmutz J."/>
            <person name="Larimer F."/>
            <person name="Land M."/>
            <person name="Hauser L."/>
            <person name="Kyrpides N."/>
            <person name="Mikhailova N."/>
            <person name="Cozen A.E."/>
            <person name="Fitz-Gibbon S.T."/>
            <person name="House C.H."/>
            <person name="Saltikov C."/>
            <person name="Lowe T."/>
            <person name="Richardson P."/>
        </authorList>
    </citation>
    <scope>NUCLEOTIDE SEQUENCE [LARGE SCALE GENOMIC DNA]</scope>
    <source>
        <strain>DSM 4184 / JCM 9189 / GEO3</strain>
    </source>
</reference>
<gene>
    <name evidence="2" type="primary">tuf</name>
    <name type="ordered locus">Pisl_0397</name>
</gene>
<name>EF1A_PYRIL</name>
<protein>
    <recommendedName>
        <fullName evidence="2">Elongation factor 1-alpha</fullName>
        <shortName evidence="2">EF-1-alpha</shortName>
        <ecNumber evidence="2">3.6.5.3</ecNumber>
    </recommendedName>
    <alternativeName>
        <fullName evidence="2">Elongation factor Tu</fullName>
        <shortName evidence="2">EF-Tu</shortName>
    </alternativeName>
</protein>
<sequence length="444" mass="48899">MPSIILPPKPTALQKPHLNLAVIGHVDNGKSTLVGRLLYETGYVDEKAFKEIEEMAKKMGKEDFAFAWILDRFKEERERGVTIEATHVGFETNKLFITIIDLPGHRDFIKNMIVGASQADAALFVISARPGEFETAIGPQGQGREHLFLIRTLGVQQIVVAVNKMDIVNYDQKRYEQIKAEVSKLLKLLGYDPSKIHFIPVSAIKGDNVKTKSSNTPWYNGPTLLEALDTFQPPPRPVDKPLRMPIQDVFTITGAGTVVVGRVETGVLKVGDRVVIVPPAKVGDVRSIETHHMKLEQAQPGDNIGVNVRGISKEDVRRGDVLGKVDNVPTVAEEIVARVVILWHPTAIGPGYAPVMHIHTATVPVQIVELVSKLDPRTGQAVEQKPQFIKQGDVAIVKIKPLKPVVAEKFSEFPALGRFALRDMGRTIAAGQIIEVKPAQVQIK</sequence>
<keyword id="KW-0963">Cytoplasm</keyword>
<keyword id="KW-0251">Elongation factor</keyword>
<keyword id="KW-0342">GTP-binding</keyword>
<keyword id="KW-0378">Hydrolase</keyword>
<keyword id="KW-0460">Magnesium</keyword>
<keyword id="KW-0479">Metal-binding</keyword>
<keyword id="KW-0547">Nucleotide-binding</keyword>
<keyword id="KW-0648">Protein biosynthesis</keyword>
<accession>A1RRJ3</accession>
<feature type="chain" id="PRO_0000337611" description="Elongation factor 1-alpha">
    <location>
        <begin position="1"/>
        <end position="444"/>
    </location>
</feature>
<feature type="domain" description="tr-type G">
    <location>
        <begin position="15"/>
        <end position="236"/>
    </location>
</feature>
<feature type="region of interest" description="G1" evidence="1">
    <location>
        <begin position="24"/>
        <end position="31"/>
    </location>
</feature>
<feature type="region of interest" description="G2" evidence="1">
    <location>
        <begin position="80"/>
        <end position="84"/>
    </location>
</feature>
<feature type="region of interest" description="G3" evidence="1">
    <location>
        <begin position="101"/>
        <end position="104"/>
    </location>
</feature>
<feature type="region of interest" description="G4" evidence="1">
    <location>
        <begin position="163"/>
        <end position="166"/>
    </location>
</feature>
<feature type="region of interest" description="G5" evidence="1">
    <location>
        <begin position="202"/>
        <end position="204"/>
    </location>
</feature>
<feature type="binding site" evidence="2">
    <location>
        <begin position="24"/>
        <end position="31"/>
    </location>
    <ligand>
        <name>GTP</name>
        <dbReference type="ChEBI" id="CHEBI:37565"/>
    </ligand>
</feature>
<feature type="binding site" evidence="2">
    <location>
        <position position="31"/>
    </location>
    <ligand>
        <name>Mg(2+)</name>
        <dbReference type="ChEBI" id="CHEBI:18420"/>
    </ligand>
</feature>
<feature type="binding site" evidence="2">
    <location>
        <begin position="101"/>
        <end position="105"/>
    </location>
    <ligand>
        <name>GTP</name>
        <dbReference type="ChEBI" id="CHEBI:37565"/>
    </ligand>
</feature>
<feature type="binding site" evidence="2">
    <location>
        <begin position="163"/>
        <end position="166"/>
    </location>
    <ligand>
        <name>GTP</name>
        <dbReference type="ChEBI" id="CHEBI:37565"/>
    </ligand>
</feature>
<evidence type="ECO:0000250" key="1"/>
<evidence type="ECO:0000255" key="2">
    <source>
        <dbReference type="HAMAP-Rule" id="MF_00118"/>
    </source>
</evidence>
<proteinExistence type="inferred from homology"/>